<comment type="function">
    <text evidence="2 3 6 8">Plays a role in DNA damage repair as component of the ASCC complex (PubMed:29997253). Part of the ASC-1 complex that enhances NF-kappa-B, SRF and AP1 transactivation (PubMed:12077347). In cells responding to gastrin-activated paracrine signals, it is involved in the induction of SERPINB2 expression by gastrin. May also play a role in the development of neuromuscular junction.</text>
</comment>
<comment type="subunit">
    <text evidence="2 5 6 7 8 9">Identified in the ASCC complex that contains ASCC1, ASCC2 and ASCC3 (PubMed:29144457, PubMed:29997253). Interacts directly with ASCC3 (PubMed:29997253). The ASCC complex interacts with ALKBH3 (PubMed:22055184, PubMed:29144457). Part of the ASC-1 complex, that contains TRIP4, ASCC1, ASCC2 and ASCC3 (PubMed:12077347). Interacts with CSRP1 (PubMed:26924529). Interacts with ZCCHC4 (PubMed:31799605).</text>
</comment>
<comment type="interaction">
    <interactant intactId="EBI-10268317">
        <id>Q8N9N2</id>
    </interactant>
    <interactant intactId="EBI-1210710">
        <id>Q8N3C0</id>
        <label>ASCC3</label>
    </interactant>
    <organismsDiffer>false</organismsDiffer>
    <experiments>3</experiments>
</comment>
<comment type="interaction">
    <interactant intactId="EBI-10268317">
        <id>Q8N9N2</id>
    </interactant>
    <interactant intactId="EBI-355744">
        <id>Q12933</id>
        <label>TRAF2</label>
    </interactant>
    <organismsDiffer>false</organismsDiffer>
    <experiments>3</experiments>
</comment>
<comment type="interaction">
    <interactant intactId="EBI-10962548">
        <id>Q8N9N2-2</id>
    </interactant>
    <interactant intactId="EBI-1210710">
        <id>Q8N3C0</id>
        <label>ASCC3</label>
    </interactant>
    <organismsDiffer>false</organismsDiffer>
    <experiments>4</experiments>
</comment>
<comment type="interaction">
    <interactant intactId="EBI-10962548">
        <id>Q8N9N2-2</id>
    </interactant>
    <interactant intactId="EBI-355744">
        <id>Q12933</id>
        <label>TRAF2</label>
    </interactant>
    <organismsDiffer>false</organismsDiffer>
    <experiments>3</experiments>
</comment>
<comment type="interaction">
    <interactant intactId="EBI-10962548">
        <id>Q8N9N2-2</id>
    </interactant>
    <interactant intactId="EBI-357631">
        <id>Q13114</id>
        <label>TRAF3</label>
    </interactant>
    <organismsDiffer>false</organismsDiffer>
    <experiments>3</experiments>
</comment>
<comment type="subcellular location">
    <subcellularLocation>
        <location evidence="2 6">Nucleus</location>
    </subcellularLocation>
    <subcellularLocation>
        <location evidence="8">Nucleus speckle</location>
    </subcellularLocation>
    <text evidence="8">Colocalizes with PRPF8 in nuclear speckles in the absence of DNA damage.</text>
</comment>
<comment type="alternative products">
    <event type="alternative splicing"/>
    <isoform>
        <id>Q8N9N2-1</id>
        <name>1</name>
        <sequence type="displayed"/>
    </isoform>
    <isoform>
        <id>Q8N9N2-2</id>
        <name>2</name>
        <sequence type="described" ref="VSP_011007 VSP_011008"/>
    </isoform>
</comment>
<comment type="tissue specificity">
    <text evidence="2">Ubiquitous.</text>
</comment>
<comment type="disease" evidence="4">
    <disease id="DI-03276">
        <name>Barrett esophagus</name>
        <acronym>BE</acronym>
        <description>A condition characterized by a metaplastic change in which normal esophageal squamous epithelium is replaced by a columnar and intestinal-type epithelium. Patients with Barrett esophagus have an increased risk of esophageal adenocarcinoma. The main cause of Barrett esophagus is gastroesophageal reflux. The retrograde movement of acid and bile salts from the stomach into the esophagus causes prolonged injury to the esophageal epithelium and induces chronic esophagitis, which in turn is believed to trigger the pathologic changes.</description>
        <dbReference type="MIM" id="614266"/>
    </disease>
    <text>The gene represented in this entry may be involved in disease pathogenesis.</text>
</comment>
<comment type="disease" evidence="6">
    <disease id="DI-04682">
        <name>Spinal muscular atrophy with congenital bone fractures 2</name>
        <acronym>SMABF2</acronym>
        <description>An autosomal recessive neuromuscular disorder characterized by prenatal-onset spinal muscular atrophy, multiple congenital contractures consistent with arthrogryposis multiplex congenita, respiratory distress, and congenital bone fractures.</description>
        <dbReference type="MIM" id="616867"/>
    </disease>
    <text>The disease is caused by variants affecting the gene represented in this entry.</text>
</comment>
<sequence>MEVLRPQLIRIDGRNYRKNPVQEQTYQHEEDEEDFYQGSMECADEPCDAYEVEQTPQGFRSTLRAPSLLYNLIHLNTSNDCGFQKITLDCQNIYTWKSRHIVGKRGDTRKKIEMETKTSISIPKPGQDGEIVITGQHRNGVISARTRIDVLLDTFRRKQPFTHFLAFFLNEVEVQEGFLRFQEEVLAKCSMDHGVDSSIFQNPKKLHLTIGMLVLLSEEEIQQTCEMLQQCKEEFINDISGGKPLEVEMAGIEYMNDDPGMVDVLYAKVHMKDGSNRLQELVDRVLERFQASGLIVKEWNSVKLHATVMNTLFRKDPNAEGRYNLYTAEGKYIFKERESFDGRNILKSFALLPRLEYNDAISAHCNLCLPGSSDSPASASQVAGITGVSDAYSQSLPGKS</sequence>
<evidence type="ECO:0000255" key="1">
    <source>
        <dbReference type="PROSITE-ProRule" id="PRU00117"/>
    </source>
</evidence>
<evidence type="ECO:0000269" key="2">
    <source>
    </source>
</evidence>
<evidence type="ECO:0000269" key="3">
    <source>
    </source>
</evidence>
<evidence type="ECO:0000269" key="4">
    <source>
    </source>
</evidence>
<evidence type="ECO:0000269" key="5">
    <source>
    </source>
</evidence>
<evidence type="ECO:0000269" key="6">
    <source>
    </source>
</evidence>
<evidence type="ECO:0000269" key="7">
    <source>
    </source>
</evidence>
<evidence type="ECO:0000269" key="8">
    <source>
    </source>
</evidence>
<evidence type="ECO:0000269" key="9">
    <source>
    </source>
</evidence>
<evidence type="ECO:0000303" key="10">
    <source>
    </source>
</evidence>
<evidence type="ECO:0000303" key="11">
    <source>
    </source>
</evidence>
<evidence type="ECO:0000303" key="12">
    <source>
    </source>
</evidence>
<evidence type="ECO:0000303" key="13">
    <source>
    </source>
</evidence>
<evidence type="ECO:0000305" key="14"/>
<keyword id="KW-0002">3D-structure</keyword>
<keyword id="KW-0025">Alternative splicing</keyword>
<keyword id="KW-0903">Direct protein sequencing</keyword>
<keyword id="KW-0227">DNA damage</keyword>
<keyword id="KW-0234">DNA repair</keyword>
<keyword id="KW-0523">Neurodegeneration</keyword>
<keyword id="KW-0539">Nucleus</keyword>
<keyword id="KW-1267">Proteomics identification</keyword>
<keyword id="KW-1185">Reference proteome</keyword>
<keyword id="KW-0804">Transcription</keyword>
<keyword id="KW-0805">Transcription regulation</keyword>
<name>ASCC1_HUMAN</name>
<proteinExistence type="evidence at protein level"/>
<gene>
    <name type="primary">ASCC1</name>
    <name type="ORF">CGI-18</name>
</gene>
<organism>
    <name type="scientific">Homo sapiens</name>
    <name type="common">Human</name>
    <dbReference type="NCBI Taxonomy" id="9606"/>
    <lineage>
        <taxon>Eukaryota</taxon>
        <taxon>Metazoa</taxon>
        <taxon>Chordata</taxon>
        <taxon>Craniata</taxon>
        <taxon>Vertebrata</taxon>
        <taxon>Euteleostomi</taxon>
        <taxon>Mammalia</taxon>
        <taxon>Eutheria</taxon>
        <taxon>Euarchontoglires</taxon>
        <taxon>Primates</taxon>
        <taxon>Haplorrhini</taxon>
        <taxon>Catarrhini</taxon>
        <taxon>Hominidae</taxon>
        <taxon>Homo</taxon>
    </lineage>
</organism>
<protein>
    <recommendedName>
        <fullName>Activating signal cointegrator 1 complex subunit 1</fullName>
    </recommendedName>
    <alternativeName>
        <fullName evidence="11">ASC-1 complex subunit p50</fullName>
    </alternativeName>
    <alternativeName>
        <fullName evidence="11">Trip4 complex subunit p50</fullName>
    </alternativeName>
</protein>
<reference key="1">
    <citation type="journal article" date="2002" name="Mol. Cell. Biol.">
        <title>Novel transcription coactivator complex containing activating signal cointegrator 1.</title>
        <authorList>
            <person name="Jung D.-J."/>
            <person name="Sung H.-S."/>
            <person name="Goo Y.-W."/>
            <person name="Lee H.M."/>
            <person name="Park O.K."/>
            <person name="Jung S.-Y."/>
            <person name="Lim J."/>
            <person name="Kim H.-J."/>
            <person name="Lee S.-K."/>
            <person name="Kim T.S."/>
            <person name="Lee J.W."/>
            <person name="Lee Y.C."/>
        </authorList>
    </citation>
    <scope>NUCLEOTIDE SEQUENCE [MRNA] (ISOFORM 2)</scope>
    <scope>PARTIAL PROTEIN SEQUENCE</scope>
    <scope>FUNCTION</scope>
    <scope>IDENTIFICATION OF THE ASC-1 COMPLEX</scope>
    <scope>SUBCELLULAR LOCATION</scope>
    <scope>TISSUE SPECIFICITY</scope>
    <source>
        <tissue>Cervix carcinoma</tissue>
    </source>
</reference>
<reference key="2">
    <citation type="journal article" date="2000" name="Genome Res.">
        <title>Identification of novel human genes evolutionarily conserved in Caenorhabditis elegans by comparative proteomics.</title>
        <authorList>
            <person name="Lai C.-H."/>
            <person name="Chou C.-Y."/>
            <person name="Ch'ang L.-Y."/>
            <person name="Liu C.-S."/>
            <person name="Lin W.-C."/>
        </authorList>
    </citation>
    <scope>NUCLEOTIDE SEQUENCE [LARGE SCALE MRNA] (ISOFORM 2)</scope>
</reference>
<reference key="3">
    <citation type="journal article" date="2004" name="Nat. Genet.">
        <title>Complete sequencing and characterization of 21,243 full-length human cDNAs.</title>
        <authorList>
            <person name="Ota T."/>
            <person name="Suzuki Y."/>
            <person name="Nishikawa T."/>
            <person name="Otsuki T."/>
            <person name="Sugiyama T."/>
            <person name="Irie R."/>
            <person name="Wakamatsu A."/>
            <person name="Hayashi K."/>
            <person name="Sato H."/>
            <person name="Nagai K."/>
            <person name="Kimura K."/>
            <person name="Makita H."/>
            <person name="Sekine M."/>
            <person name="Obayashi M."/>
            <person name="Nishi T."/>
            <person name="Shibahara T."/>
            <person name="Tanaka T."/>
            <person name="Ishii S."/>
            <person name="Yamamoto J."/>
            <person name="Saito K."/>
            <person name="Kawai Y."/>
            <person name="Isono Y."/>
            <person name="Nakamura Y."/>
            <person name="Nagahari K."/>
            <person name="Murakami K."/>
            <person name="Yasuda T."/>
            <person name="Iwayanagi T."/>
            <person name="Wagatsuma M."/>
            <person name="Shiratori A."/>
            <person name="Sudo H."/>
            <person name="Hosoiri T."/>
            <person name="Kaku Y."/>
            <person name="Kodaira H."/>
            <person name="Kondo H."/>
            <person name="Sugawara M."/>
            <person name="Takahashi M."/>
            <person name="Kanda K."/>
            <person name="Yokoi T."/>
            <person name="Furuya T."/>
            <person name="Kikkawa E."/>
            <person name="Omura Y."/>
            <person name="Abe K."/>
            <person name="Kamihara K."/>
            <person name="Katsuta N."/>
            <person name="Sato K."/>
            <person name="Tanikawa M."/>
            <person name="Yamazaki M."/>
            <person name="Ninomiya K."/>
            <person name="Ishibashi T."/>
            <person name="Yamashita H."/>
            <person name="Murakawa K."/>
            <person name="Fujimori K."/>
            <person name="Tanai H."/>
            <person name="Kimata M."/>
            <person name="Watanabe M."/>
            <person name="Hiraoka S."/>
            <person name="Chiba Y."/>
            <person name="Ishida S."/>
            <person name="Ono Y."/>
            <person name="Takiguchi S."/>
            <person name="Watanabe S."/>
            <person name="Yosida M."/>
            <person name="Hotuta T."/>
            <person name="Kusano J."/>
            <person name="Kanehori K."/>
            <person name="Takahashi-Fujii A."/>
            <person name="Hara H."/>
            <person name="Tanase T.-O."/>
            <person name="Nomura Y."/>
            <person name="Togiya S."/>
            <person name="Komai F."/>
            <person name="Hara R."/>
            <person name="Takeuchi K."/>
            <person name="Arita M."/>
            <person name="Imose N."/>
            <person name="Musashino K."/>
            <person name="Yuuki H."/>
            <person name="Oshima A."/>
            <person name="Sasaki N."/>
            <person name="Aotsuka S."/>
            <person name="Yoshikawa Y."/>
            <person name="Matsunawa H."/>
            <person name="Ichihara T."/>
            <person name="Shiohata N."/>
            <person name="Sano S."/>
            <person name="Moriya S."/>
            <person name="Momiyama H."/>
            <person name="Satoh N."/>
            <person name="Takami S."/>
            <person name="Terashima Y."/>
            <person name="Suzuki O."/>
            <person name="Nakagawa S."/>
            <person name="Senoh A."/>
            <person name="Mizoguchi H."/>
            <person name="Goto Y."/>
            <person name="Shimizu F."/>
            <person name="Wakebe H."/>
            <person name="Hishigaki H."/>
            <person name="Watanabe T."/>
            <person name="Sugiyama A."/>
            <person name="Takemoto M."/>
            <person name="Kawakami B."/>
            <person name="Yamazaki M."/>
            <person name="Watanabe K."/>
            <person name="Kumagai A."/>
            <person name="Itakura S."/>
            <person name="Fukuzumi Y."/>
            <person name="Fujimori Y."/>
            <person name="Komiyama M."/>
            <person name="Tashiro H."/>
            <person name="Tanigami A."/>
            <person name="Fujiwara T."/>
            <person name="Ono T."/>
            <person name="Yamada K."/>
            <person name="Fujii Y."/>
            <person name="Ozaki K."/>
            <person name="Hirao M."/>
            <person name="Ohmori Y."/>
            <person name="Kawabata A."/>
            <person name="Hikiji T."/>
            <person name="Kobatake N."/>
            <person name="Inagaki H."/>
            <person name="Ikema Y."/>
            <person name="Okamoto S."/>
            <person name="Okitani R."/>
            <person name="Kawakami T."/>
            <person name="Noguchi S."/>
            <person name="Itoh T."/>
            <person name="Shigeta K."/>
            <person name="Senba T."/>
            <person name="Matsumura K."/>
            <person name="Nakajima Y."/>
            <person name="Mizuno T."/>
            <person name="Morinaga M."/>
            <person name="Sasaki M."/>
            <person name="Togashi T."/>
            <person name="Oyama M."/>
            <person name="Hata H."/>
            <person name="Watanabe M."/>
            <person name="Komatsu T."/>
            <person name="Mizushima-Sugano J."/>
            <person name="Satoh T."/>
            <person name="Shirai Y."/>
            <person name="Takahashi Y."/>
            <person name="Nakagawa K."/>
            <person name="Okumura K."/>
            <person name="Nagase T."/>
            <person name="Nomura N."/>
            <person name="Kikuchi H."/>
            <person name="Masuho Y."/>
            <person name="Yamashita R."/>
            <person name="Nakai K."/>
            <person name="Yada T."/>
            <person name="Nakamura Y."/>
            <person name="Ohara O."/>
            <person name="Isogai T."/>
            <person name="Sugano S."/>
        </authorList>
    </citation>
    <scope>NUCLEOTIDE SEQUENCE [LARGE SCALE MRNA] (ISOFORMS 1 AND 2)</scope>
    <source>
        <tissue>Astrocyte</tissue>
        <tissue>Placenta</tissue>
    </source>
</reference>
<reference key="4">
    <citation type="journal article" date="2004" name="Nature">
        <title>The DNA sequence and comparative analysis of human chromosome 10.</title>
        <authorList>
            <person name="Deloukas P."/>
            <person name="Earthrowl M.E."/>
            <person name="Grafham D.V."/>
            <person name="Rubenfield M."/>
            <person name="French L."/>
            <person name="Steward C.A."/>
            <person name="Sims S.K."/>
            <person name="Jones M.C."/>
            <person name="Searle S."/>
            <person name="Scott C."/>
            <person name="Howe K."/>
            <person name="Hunt S.E."/>
            <person name="Andrews T.D."/>
            <person name="Gilbert J.G.R."/>
            <person name="Swarbreck D."/>
            <person name="Ashurst J.L."/>
            <person name="Taylor A."/>
            <person name="Battles J."/>
            <person name="Bird C.P."/>
            <person name="Ainscough R."/>
            <person name="Almeida J.P."/>
            <person name="Ashwell R.I.S."/>
            <person name="Ambrose K.D."/>
            <person name="Babbage A.K."/>
            <person name="Bagguley C.L."/>
            <person name="Bailey J."/>
            <person name="Banerjee R."/>
            <person name="Bates K."/>
            <person name="Beasley H."/>
            <person name="Bray-Allen S."/>
            <person name="Brown A.J."/>
            <person name="Brown J.Y."/>
            <person name="Burford D.C."/>
            <person name="Burrill W."/>
            <person name="Burton J."/>
            <person name="Cahill P."/>
            <person name="Camire D."/>
            <person name="Carter N.P."/>
            <person name="Chapman J.C."/>
            <person name="Clark S.Y."/>
            <person name="Clarke G."/>
            <person name="Clee C.M."/>
            <person name="Clegg S."/>
            <person name="Corby N."/>
            <person name="Coulson A."/>
            <person name="Dhami P."/>
            <person name="Dutta I."/>
            <person name="Dunn M."/>
            <person name="Faulkner L."/>
            <person name="Frankish A."/>
            <person name="Frankland J.A."/>
            <person name="Garner P."/>
            <person name="Garnett J."/>
            <person name="Gribble S."/>
            <person name="Griffiths C."/>
            <person name="Grocock R."/>
            <person name="Gustafson E."/>
            <person name="Hammond S."/>
            <person name="Harley J.L."/>
            <person name="Hart E."/>
            <person name="Heath P.D."/>
            <person name="Ho T.P."/>
            <person name="Hopkins B."/>
            <person name="Horne J."/>
            <person name="Howden P.J."/>
            <person name="Huckle E."/>
            <person name="Hynds C."/>
            <person name="Johnson C."/>
            <person name="Johnson D."/>
            <person name="Kana A."/>
            <person name="Kay M."/>
            <person name="Kimberley A.M."/>
            <person name="Kershaw J.K."/>
            <person name="Kokkinaki M."/>
            <person name="Laird G.K."/>
            <person name="Lawlor S."/>
            <person name="Lee H.M."/>
            <person name="Leongamornlert D.A."/>
            <person name="Laird G."/>
            <person name="Lloyd C."/>
            <person name="Lloyd D.M."/>
            <person name="Loveland J."/>
            <person name="Lovell J."/>
            <person name="McLaren S."/>
            <person name="McLay K.E."/>
            <person name="McMurray A."/>
            <person name="Mashreghi-Mohammadi M."/>
            <person name="Matthews L."/>
            <person name="Milne S."/>
            <person name="Nickerson T."/>
            <person name="Nguyen M."/>
            <person name="Overton-Larty E."/>
            <person name="Palmer S.A."/>
            <person name="Pearce A.V."/>
            <person name="Peck A.I."/>
            <person name="Pelan S."/>
            <person name="Phillimore B."/>
            <person name="Porter K."/>
            <person name="Rice C.M."/>
            <person name="Rogosin A."/>
            <person name="Ross M.T."/>
            <person name="Sarafidou T."/>
            <person name="Sehra H.K."/>
            <person name="Shownkeen R."/>
            <person name="Skuce C.D."/>
            <person name="Smith M."/>
            <person name="Standring L."/>
            <person name="Sycamore N."/>
            <person name="Tester J."/>
            <person name="Thorpe A."/>
            <person name="Torcasso W."/>
            <person name="Tracey A."/>
            <person name="Tromans A."/>
            <person name="Tsolas J."/>
            <person name="Wall M."/>
            <person name="Walsh J."/>
            <person name="Wang H."/>
            <person name="Weinstock K."/>
            <person name="West A.P."/>
            <person name="Willey D.L."/>
            <person name="Whitehead S.L."/>
            <person name="Wilming L."/>
            <person name="Wray P.W."/>
            <person name="Young L."/>
            <person name="Chen Y."/>
            <person name="Lovering R.C."/>
            <person name="Moschonas N.K."/>
            <person name="Siebert R."/>
            <person name="Fechtel K."/>
            <person name="Bentley D."/>
            <person name="Durbin R.M."/>
            <person name="Hubbard T."/>
            <person name="Doucette-Stamm L."/>
            <person name="Beck S."/>
            <person name="Smith D.R."/>
            <person name="Rogers J."/>
        </authorList>
    </citation>
    <scope>NUCLEOTIDE SEQUENCE [LARGE SCALE GENOMIC DNA]</scope>
</reference>
<reference key="5">
    <citation type="submission" date="2005-07" db="EMBL/GenBank/DDBJ databases">
        <authorList>
            <person name="Mural R.J."/>
            <person name="Istrail S."/>
            <person name="Sutton G.G."/>
            <person name="Florea L."/>
            <person name="Halpern A.L."/>
            <person name="Mobarry C.M."/>
            <person name="Lippert R."/>
            <person name="Walenz B."/>
            <person name="Shatkay H."/>
            <person name="Dew I."/>
            <person name="Miller J.R."/>
            <person name="Flanigan M.J."/>
            <person name="Edwards N.J."/>
            <person name="Bolanos R."/>
            <person name="Fasulo D."/>
            <person name="Halldorsson B.V."/>
            <person name="Hannenhalli S."/>
            <person name="Turner R."/>
            <person name="Yooseph S."/>
            <person name="Lu F."/>
            <person name="Nusskern D.R."/>
            <person name="Shue B.C."/>
            <person name="Zheng X.H."/>
            <person name="Zhong F."/>
            <person name="Delcher A.L."/>
            <person name="Huson D.H."/>
            <person name="Kravitz S.A."/>
            <person name="Mouchard L."/>
            <person name="Reinert K."/>
            <person name="Remington K.A."/>
            <person name="Clark A.G."/>
            <person name="Waterman M.S."/>
            <person name="Eichler E.E."/>
            <person name="Adams M.D."/>
            <person name="Hunkapiller M.W."/>
            <person name="Myers E.W."/>
            <person name="Venter J.C."/>
        </authorList>
    </citation>
    <scope>NUCLEOTIDE SEQUENCE [LARGE SCALE GENOMIC DNA]</scope>
</reference>
<reference key="6">
    <citation type="journal article" date="2004" name="Genome Res.">
        <title>The status, quality, and expansion of the NIH full-length cDNA project: the Mammalian Gene Collection (MGC).</title>
        <authorList>
            <consortium name="The MGC Project Team"/>
        </authorList>
    </citation>
    <scope>NUCLEOTIDE SEQUENCE [LARGE SCALE MRNA] (ISOFORM 2)</scope>
    <source>
        <tissue>Ovary</tissue>
    </source>
</reference>
<reference key="7">
    <citation type="journal article" date="2009" name="Am. J. Physiol.">
        <title>Gastrin activates paracrine networks leading to induction of PAI-2 via MAZ and ASC-1.</title>
        <authorList>
            <person name="Almeida-Vega S."/>
            <person name="Catlow K."/>
            <person name="Kenny S."/>
            <person name="Dimaline R."/>
            <person name="Varro A."/>
        </authorList>
    </citation>
    <scope>FUNCTION</scope>
</reference>
<reference key="8">
    <citation type="journal article" date="2011" name="BMC Syst. Biol.">
        <title>Initial characterization of the human central proteome.</title>
        <authorList>
            <person name="Burkard T.R."/>
            <person name="Planyavsky M."/>
            <person name="Kaupe I."/>
            <person name="Breitwieser F.P."/>
            <person name="Buerckstuemmer T."/>
            <person name="Bennett K.L."/>
            <person name="Superti-Furga G."/>
            <person name="Colinge J."/>
        </authorList>
    </citation>
    <scope>IDENTIFICATION BY MASS SPECTROMETRY [LARGE SCALE ANALYSIS]</scope>
</reference>
<reference key="9">
    <citation type="journal article" date="2011" name="JAMA">
        <title>Germline mutations in MSR1, ASCC1, and CTHRC1 in patients with Barrett esophagus and esophageal adenocarcinoma.</title>
        <authorList>
            <person name="Orloff M."/>
            <person name="Peterson C."/>
            <person name="He X."/>
            <person name="Ganapathi S."/>
            <person name="Heald B."/>
            <person name="Yang Y.R."/>
            <person name="Bebek G."/>
            <person name="Romigh T."/>
            <person name="Song J.H."/>
            <person name="Wu W."/>
            <person name="David S."/>
            <person name="Cheng Y."/>
            <person name="Meltzer S.J."/>
            <person name="Eng C."/>
        </authorList>
    </citation>
    <scope>INVOLVEMENT IN BE</scope>
    <scope>VARIANT SER-318</scope>
</reference>
<reference key="10">
    <citation type="journal article" date="2011" name="Mol. Cell">
        <title>DNA unwinding by ASCC3 helicase is coupled to ALKBH3-dependent DNA alkylation repair and cancer cell proliferation.</title>
        <authorList>
            <person name="Dango S."/>
            <person name="Mosammaparast N."/>
            <person name="Sowa M.E."/>
            <person name="Xiong L.J."/>
            <person name="Wu F."/>
            <person name="Park K."/>
            <person name="Rubin M."/>
            <person name="Gygi S."/>
            <person name="Harper J.W."/>
            <person name="Shi Y."/>
        </authorList>
    </citation>
    <scope>INTERACTION WITH ALKBH3</scope>
</reference>
<reference key="11">
    <citation type="journal article" date="2016" name="Am. J. Hum. Genet.">
        <title>Mutations in subunits of the activating signal cointegrator 1 complex are associated with prenatal spinal muscular atrophy and congenital bone fractures.</title>
        <authorList>
            <person name="Knierim E."/>
            <person name="Hirata H."/>
            <person name="Wolf N.I."/>
            <person name="Morales-Gonzalez S."/>
            <person name="Schottmann G."/>
            <person name="Tanaka Y."/>
            <person name="Rudnik-Schoeneborn S."/>
            <person name="Orgeur M."/>
            <person name="Zerres K."/>
            <person name="Vogt S."/>
            <person name="van Riesen A."/>
            <person name="Gill E."/>
            <person name="Seifert F."/>
            <person name="Zwirner A."/>
            <person name="Kirschner J."/>
            <person name="Goebel H.H."/>
            <person name="Huebner C."/>
            <person name="Stricker S."/>
            <person name="Meierhofer D."/>
            <person name="Stenzel W."/>
            <person name="Schuelke M."/>
        </authorList>
    </citation>
    <scope>FUNCTION</scope>
    <scope>INTERACTION WITH CSRP1</scope>
    <scope>SUBCELLULAR LOCATION</scope>
    <scope>INVOLVEMENT IN SMABF2</scope>
</reference>
<reference key="12">
    <citation type="journal article" date="2017" name="Nature">
        <title>A ubiquitin-dependent signalling axis specific for ALKBH-mediated DNA dealkylation repair.</title>
        <authorList>
            <person name="Brickner J.R."/>
            <person name="Soll J.M."/>
            <person name="Lombardi P.M."/>
            <person name="Vaagboe C.B."/>
            <person name="Mudge M.C."/>
            <person name="Oyeniran C."/>
            <person name="Rabe R."/>
            <person name="Jackson J."/>
            <person name="Sullender M.E."/>
            <person name="Blazosky E."/>
            <person name="Byrum A.K."/>
            <person name="Zhao Y."/>
            <person name="Corbett M.A."/>
            <person name="Gecz J."/>
            <person name="Field M."/>
            <person name="Vindigni A."/>
            <person name="Slupphaug G."/>
            <person name="Wolberger C."/>
            <person name="Mosammaparast N."/>
        </authorList>
    </citation>
    <scope>IDENTIFICATION IN A COMPLEX WITH ASCC1 AND ASCC3</scope>
    <scope>SUBUNIT</scope>
    <scope>IDENTIFICATION BY MASS SPECTROMETRY</scope>
</reference>
<reference key="13">
    <citation type="journal article" date="2018" name="J. Biol. Chem.">
        <title>RNA ligase-like domain in activating signal cointegrator 1 complex subunit 1 (ASCC1) regulates ASCC complex function during alkylation damage.</title>
        <authorList>
            <person name="Soll J.M."/>
            <person name="Brickner J.R."/>
            <person name="Mudge M.C."/>
            <person name="Mosammaparast N."/>
        </authorList>
    </citation>
    <scope>FUNCTION</scope>
    <scope>SUBUNIT</scope>
    <scope>INTERACTION WITH ASCC3</scope>
    <scope>SUBCELLULAR LOCATION</scope>
</reference>
<reference key="14">
    <citation type="journal article" date="2020" name="Nucleic Acids Res.">
        <title>The human methyltransferase ZCCHC4 catalyses N6-methyladenosine modification of 28S ribosomal RNA.</title>
        <authorList>
            <person name="Pinto R."/>
            <person name="Vaagboe C.B."/>
            <person name="Jakobsson M.E."/>
            <person name="Kim Y."/>
            <person name="Baltissen M.P."/>
            <person name="O'Donohue M.F."/>
            <person name="Guzman U.H."/>
            <person name="Malecki J.M."/>
            <person name="Wu J."/>
            <person name="Kirpekar F."/>
            <person name="Olsen J.V."/>
            <person name="Gleizes P.E."/>
            <person name="Vermeulen M."/>
            <person name="Leidel S.A."/>
            <person name="Slupphaug G."/>
            <person name="Falnes P.O."/>
        </authorList>
    </citation>
    <scope>INTERACTION WITH ZCCHC4</scope>
</reference>
<dbReference type="EMBL" id="AY013290">
    <property type="protein sequence ID" value="AAG45476.1"/>
    <property type="molecule type" value="mRNA"/>
</dbReference>
<dbReference type="EMBL" id="AF132952">
    <property type="protein sequence ID" value="AAD27727.1"/>
    <property type="molecule type" value="mRNA"/>
</dbReference>
<dbReference type="EMBL" id="AK094170">
    <property type="protein sequence ID" value="BAC04299.1"/>
    <property type="molecule type" value="mRNA"/>
</dbReference>
<dbReference type="EMBL" id="AK023436">
    <property type="protein sequence ID" value="BAG51193.1"/>
    <property type="molecule type" value="mRNA"/>
</dbReference>
<dbReference type="EMBL" id="AC022392">
    <property type="status" value="NOT_ANNOTATED_CDS"/>
    <property type="molecule type" value="Genomic_DNA"/>
</dbReference>
<dbReference type="EMBL" id="AL607035">
    <property type="status" value="NOT_ANNOTATED_CDS"/>
    <property type="molecule type" value="Genomic_DNA"/>
</dbReference>
<dbReference type="EMBL" id="CH471083">
    <property type="protein sequence ID" value="EAW54444.1"/>
    <property type="molecule type" value="Genomic_DNA"/>
</dbReference>
<dbReference type="EMBL" id="BC012291">
    <property type="protein sequence ID" value="AAH12291.1"/>
    <property type="molecule type" value="mRNA"/>
</dbReference>
<dbReference type="CCDS" id="CCDS31219.1">
    <molecule id="Q8N9N2-2"/>
</dbReference>
<dbReference type="CCDS" id="CCDS55713.1">
    <molecule id="Q8N9N2-1"/>
</dbReference>
<dbReference type="RefSeq" id="NP_001185727.1">
    <molecule id="Q8N9N2-2"/>
    <property type="nucleotide sequence ID" value="NM_001198798.2"/>
</dbReference>
<dbReference type="RefSeq" id="NP_001185728.1">
    <molecule id="Q8N9N2-1"/>
    <property type="nucleotide sequence ID" value="NM_001198799.3"/>
</dbReference>
<dbReference type="RefSeq" id="NP_001185729.1">
    <molecule id="Q8N9N2-2"/>
    <property type="nucleotide sequence ID" value="NM_001198800.3"/>
</dbReference>
<dbReference type="RefSeq" id="NP_001356022.1">
    <molecule id="Q8N9N2-2"/>
    <property type="nucleotide sequence ID" value="NM_001369093.1"/>
</dbReference>
<dbReference type="RefSeq" id="NP_001356023.1">
    <molecule id="Q8N9N2-2"/>
    <property type="nucleotide sequence ID" value="NM_001369094.1"/>
</dbReference>
<dbReference type="RefSeq" id="NP_001356024.1">
    <molecule id="Q8N9N2-2"/>
    <property type="nucleotide sequence ID" value="NM_001369095.1"/>
</dbReference>
<dbReference type="RefSeq" id="XP_006717936.1">
    <property type="nucleotide sequence ID" value="XM_006717873.3"/>
</dbReference>
<dbReference type="PDB" id="8TLY">
    <property type="method" value="X-ray"/>
    <property type="resolution" value="2.80 A"/>
    <property type="chains" value="A/B=162-349"/>
</dbReference>
<dbReference type="PDBsum" id="8TLY"/>
<dbReference type="SMR" id="Q8N9N2"/>
<dbReference type="BioGRID" id="119215">
    <property type="interactions" value="82"/>
</dbReference>
<dbReference type="ComplexPortal" id="CPX-6641">
    <property type="entry name" value="ASCC DNA alkylation repair complex"/>
</dbReference>
<dbReference type="CORUM" id="Q8N9N2"/>
<dbReference type="FunCoup" id="Q8N9N2">
    <property type="interactions" value="998"/>
</dbReference>
<dbReference type="IntAct" id="Q8N9N2">
    <property type="interactions" value="47"/>
</dbReference>
<dbReference type="STRING" id="9606.ENSP00000339404"/>
<dbReference type="BindingDB" id="Q8N9N2"/>
<dbReference type="GlyGen" id="Q8N9N2">
    <property type="glycosylation" value="1 site, 1 O-linked glycan (1 site)"/>
</dbReference>
<dbReference type="iPTMnet" id="Q8N9N2"/>
<dbReference type="PhosphoSitePlus" id="Q8N9N2"/>
<dbReference type="BioMuta" id="ASCC1"/>
<dbReference type="DMDM" id="50400556"/>
<dbReference type="jPOST" id="Q8N9N2"/>
<dbReference type="MassIVE" id="Q8N9N2"/>
<dbReference type="PaxDb" id="9606-ENSP00000339404"/>
<dbReference type="PeptideAtlas" id="Q8N9N2"/>
<dbReference type="ProteomicsDB" id="72561">
    <molecule id="Q8N9N2-1"/>
</dbReference>
<dbReference type="ProteomicsDB" id="72562">
    <molecule id="Q8N9N2-2"/>
</dbReference>
<dbReference type="Pumba" id="Q8N9N2"/>
<dbReference type="Antibodypedia" id="29224">
    <property type="antibodies" value="202 antibodies from 23 providers"/>
</dbReference>
<dbReference type="DNASU" id="51008"/>
<dbReference type="Ensembl" id="ENST00000317126.8">
    <molecule id="Q8N9N2-2"/>
    <property type="protein sequence ID" value="ENSP00000320461.4"/>
    <property type="gene ID" value="ENSG00000138303.19"/>
</dbReference>
<dbReference type="Ensembl" id="ENST00000342444.8">
    <molecule id="Q8N9N2-1"/>
    <property type="protein sequence ID" value="ENSP00000339404.4"/>
    <property type="gene ID" value="ENSG00000138303.19"/>
</dbReference>
<dbReference type="Ensembl" id="ENST00000394915.7">
    <molecule id="Q8N9N2-1"/>
    <property type="protein sequence ID" value="ENSP00000378373.3"/>
    <property type="gene ID" value="ENSG00000138303.19"/>
</dbReference>
<dbReference type="Ensembl" id="ENST00000672957.1">
    <molecule id="Q8N9N2-2"/>
    <property type="protein sequence ID" value="ENSP00000500935.1"/>
    <property type="gene ID" value="ENSG00000138303.19"/>
</dbReference>
<dbReference type="GeneID" id="51008"/>
<dbReference type="KEGG" id="hsa:51008"/>
<dbReference type="MANE-Select" id="ENST00000672957.1">
    <molecule id="Q8N9N2-2"/>
    <property type="protein sequence ID" value="ENSP00000500935.1"/>
    <property type="RefSeq nucleotide sequence ID" value="NM_001198800.3"/>
    <property type="RefSeq protein sequence ID" value="NP_001185729.1"/>
</dbReference>
<dbReference type="UCSC" id="uc001jst.3">
    <molecule id="Q8N9N2-1"/>
    <property type="organism name" value="human"/>
</dbReference>
<dbReference type="AGR" id="HGNC:24268"/>
<dbReference type="CTD" id="51008"/>
<dbReference type="DisGeNET" id="51008"/>
<dbReference type="GeneCards" id="ASCC1"/>
<dbReference type="HGNC" id="HGNC:24268">
    <property type="gene designation" value="ASCC1"/>
</dbReference>
<dbReference type="HPA" id="ENSG00000138303">
    <property type="expression patterns" value="Low tissue specificity"/>
</dbReference>
<dbReference type="MalaCards" id="ASCC1"/>
<dbReference type="MIM" id="614215">
    <property type="type" value="gene"/>
</dbReference>
<dbReference type="MIM" id="614266">
    <property type="type" value="phenotype"/>
</dbReference>
<dbReference type="MIM" id="616867">
    <property type="type" value="phenotype"/>
</dbReference>
<dbReference type="neXtProt" id="NX_Q8N9N2"/>
<dbReference type="OpenTargets" id="ENSG00000138303"/>
<dbReference type="Orphanet" id="486811">
    <property type="disease" value="Prenatal-onset spinal muscular atrophy with congenital bone fractures"/>
</dbReference>
<dbReference type="PharmGKB" id="PA134974899"/>
<dbReference type="VEuPathDB" id="HostDB:ENSG00000138303"/>
<dbReference type="eggNOG" id="KOG0940">
    <property type="taxonomic scope" value="Eukaryota"/>
</dbReference>
<dbReference type="eggNOG" id="KOG2814">
    <property type="taxonomic scope" value="Eukaryota"/>
</dbReference>
<dbReference type="GeneTree" id="ENSGT00390000018119"/>
<dbReference type="HOGENOM" id="CLU_044606_0_0_1"/>
<dbReference type="InParanoid" id="Q8N9N2"/>
<dbReference type="OrthoDB" id="277832at2759"/>
<dbReference type="PAN-GO" id="Q8N9N2">
    <property type="GO annotations" value="2 GO annotations based on evolutionary models"/>
</dbReference>
<dbReference type="PhylomeDB" id="Q8N9N2"/>
<dbReference type="TreeFam" id="TF314479"/>
<dbReference type="PathwayCommons" id="Q8N9N2"/>
<dbReference type="Reactome" id="R-HSA-112126">
    <property type="pathway name" value="ALKBH3 mediated reversal of alkylation damage"/>
</dbReference>
<dbReference type="SignaLink" id="Q8N9N2"/>
<dbReference type="BioGRID-ORCS" id="51008">
    <property type="hits" value="26 hits in 1157 CRISPR screens"/>
</dbReference>
<dbReference type="CD-CODE" id="232F8A39">
    <property type="entry name" value="P-body"/>
</dbReference>
<dbReference type="CD-CODE" id="804901D1">
    <property type="entry name" value="Nuclear speckle"/>
</dbReference>
<dbReference type="CD-CODE" id="DEE660B4">
    <property type="entry name" value="Stress granule"/>
</dbReference>
<dbReference type="ChiTaRS" id="ASCC1">
    <property type="organism name" value="human"/>
</dbReference>
<dbReference type="GenomeRNAi" id="51008"/>
<dbReference type="Pharos" id="Q8N9N2">
    <property type="development level" value="Tbio"/>
</dbReference>
<dbReference type="PRO" id="PR:Q8N9N2"/>
<dbReference type="Proteomes" id="UP000005640">
    <property type="component" value="Chromosome 10"/>
</dbReference>
<dbReference type="RNAct" id="Q8N9N2">
    <property type="molecule type" value="protein"/>
</dbReference>
<dbReference type="Bgee" id="ENSG00000138303">
    <property type="expression patterns" value="Expressed in calcaneal tendon and 199 other cell types or tissues"/>
</dbReference>
<dbReference type="ExpressionAtlas" id="Q8N9N2">
    <property type="expression patterns" value="baseline and differential"/>
</dbReference>
<dbReference type="GO" id="GO:1990391">
    <property type="term" value="C:DNA repair complex"/>
    <property type="evidence" value="ECO:0000353"/>
    <property type="project" value="ComplexPortal"/>
</dbReference>
<dbReference type="GO" id="GO:0016607">
    <property type="term" value="C:nuclear speck"/>
    <property type="evidence" value="ECO:0007669"/>
    <property type="project" value="UniProtKB-SubCell"/>
</dbReference>
<dbReference type="GO" id="GO:0005654">
    <property type="term" value="C:nucleoplasm"/>
    <property type="evidence" value="ECO:0000304"/>
    <property type="project" value="Reactome"/>
</dbReference>
<dbReference type="GO" id="GO:0005634">
    <property type="term" value="C:nucleus"/>
    <property type="evidence" value="ECO:0000314"/>
    <property type="project" value="UniProtKB"/>
</dbReference>
<dbReference type="GO" id="GO:0005667">
    <property type="term" value="C:transcription regulator complex"/>
    <property type="evidence" value="ECO:0000314"/>
    <property type="project" value="MGI"/>
</dbReference>
<dbReference type="GO" id="GO:0003723">
    <property type="term" value="F:RNA binding"/>
    <property type="evidence" value="ECO:0007669"/>
    <property type="project" value="InterPro"/>
</dbReference>
<dbReference type="GO" id="GO:0006307">
    <property type="term" value="P:DNA alkylation repair"/>
    <property type="evidence" value="ECO:0000303"/>
    <property type="project" value="ComplexPortal"/>
</dbReference>
<dbReference type="GO" id="GO:0006355">
    <property type="term" value="P:regulation of DNA-templated transcription"/>
    <property type="evidence" value="ECO:0000314"/>
    <property type="project" value="MGI"/>
</dbReference>
<dbReference type="CDD" id="cd22419">
    <property type="entry name" value="KH-I_ASCC1"/>
    <property type="match status" value="1"/>
</dbReference>
<dbReference type="FunFam" id="3.30.1370.10:FF:000101">
    <property type="entry name" value="Activating signal cointegrator 1 complex subunit 1"/>
    <property type="match status" value="1"/>
</dbReference>
<dbReference type="FunFam" id="3.90.1140.10:FF:000005">
    <property type="entry name" value="activating signal cointegrator 1 complex subunit 1"/>
    <property type="match status" value="1"/>
</dbReference>
<dbReference type="Gene3D" id="3.90.1140.10">
    <property type="entry name" value="Cyclic phosphodiesterase"/>
    <property type="match status" value="1"/>
</dbReference>
<dbReference type="Gene3D" id="3.30.1370.10">
    <property type="entry name" value="K Homology domain, type 1"/>
    <property type="match status" value="1"/>
</dbReference>
<dbReference type="InterPro" id="IPR019510">
    <property type="entry name" value="AKAP7-like_phosphoesterase"/>
</dbReference>
<dbReference type="InterPro" id="IPR009210">
    <property type="entry name" value="ASCC1"/>
</dbReference>
<dbReference type="InterPro" id="IPR009097">
    <property type="entry name" value="Cyclic_Pdiesterase"/>
</dbReference>
<dbReference type="InterPro" id="IPR047538">
    <property type="entry name" value="KH-I_ASCC1"/>
</dbReference>
<dbReference type="InterPro" id="IPR004088">
    <property type="entry name" value="KH_dom_type_1"/>
</dbReference>
<dbReference type="InterPro" id="IPR036612">
    <property type="entry name" value="KH_dom_type_1_sf"/>
</dbReference>
<dbReference type="PANTHER" id="PTHR13360">
    <property type="entry name" value="ACTIVATING SIGNAL COINTEGRATOR 1 COMPLEX SUBUNIT 1"/>
    <property type="match status" value="1"/>
</dbReference>
<dbReference type="PANTHER" id="PTHR13360:SF1">
    <property type="entry name" value="ACTIVATING SIGNAL COINTEGRATOR 1 COMPLEX SUBUNIT 1"/>
    <property type="match status" value="1"/>
</dbReference>
<dbReference type="Pfam" id="PF10469">
    <property type="entry name" value="AKAP7_NLS"/>
    <property type="match status" value="1"/>
</dbReference>
<dbReference type="Pfam" id="PF00013">
    <property type="entry name" value="KH_1"/>
    <property type="match status" value="1"/>
</dbReference>
<dbReference type="PIRSF" id="PIRSF027019">
    <property type="entry name" value="Euk_LigT"/>
    <property type="match status" value="1"/>
</dbReference>
<dbReference type="SUPFAM" id="SSF54791">
    <property type="entry name" value="Eukaryotic type KH-domain (KH-domain type I)"/>
    <property type="match status" value="1"/>
</dbReference>
<dbReference type="SUPFAM" id="SSF55144">
    <property type="entry name" value="LigT-like"/>
    <property type="match status" value="1"/>
</dbReference>
<dbReference type="PROSITE" id="PS50084">
    <property type="entry name" value="KH_TYPE_1"/>
    <property type="match status" value="1"/>
</dbReference>
<accession>Q8N9N2</accession>
<accession>Q5SW06</accession>
<accession>Q5SW07</accession>
<accession>Q96EI8</accession>
<accession>Q9Y307</accession>
<feature type="chain" id="PRO_0000050100" description="Activating signal cointegrator 1 complex subunit 1">
    <location>
        <begin position="1"/>
        <end position="400"/>
    </location>
</feature>
<feature type="domain" description="KH" evidence="1">
    <location>
        <begin position="86"/>
        <end position="148"/>
    </location>
</feature>
<feature type="region of interest" description="Required for interaction with ASCC3" evidence="8">
    <location>
        <begin position="1"/>
        <end position="53"/>
    </location>
</feature>
<feature type="splice variant" id="VSP_011007" description="In isoform 2." evidence="10 11 12 13">
    <original>NLIHLNTSNDCGFQKITLDCQNIYTWKSR</original>
    <variation>K</variation>
    <location>
        <begin position="71"/>
        <end position="99"/>
    </location>
</feature>
<feature type="splice variant" id="VSP_011008" description="In isoform 2." evidence="10 11 12 13">
    <original>SFALLPRLEYNDAISAHCNLCLPGSSDSPASASQVAGITGVSDAYSQSLPGKS</original>
    <variation>LFENFYFGSLKLNSIHISQRFTVDSFGNYASCGQIDFS</variation>
    <location>
        <begin position="348"/>
        <end position="400"/>
    </location>
</feature>
<feature type="sequence variant" id="VAR_061278" description="In dbSNP:rs11558719.">
    <original>D</original>
    <variation>N</variation>
    <location>
        <position position="34"/>
    </location>
</feature>
<feature type="sequence variant" id="VAR_066588" description="Found in patients with Barrett esophagus; dbSNP:rs146370051." evidence="4">
    <original>N</original>
    <variation>S</variation>
    <location>
        <position position="318"/>
    </location>
</feature>
<feature type="sequence conflict" description="In Ref. 1; AAG45476 and 2; AAD27727." evidence="14" ref="1 2">
    <original>I</original>
    <variation>F</variation>
    <location>
        <position position="11"/>
    </location>
</feature>
<feature type="sequence conflict" description="In Ref. 1; AAG45476 and 2; AAD27727." evidence="14" ref="1 2">
    <original>SGGK</original>
    <variation>PGR</variation>
    <location>
        <begin position="240"/>
        <end position="243"/>
    </location>
</feature>
<feature type="sequence conflict" description="In Ref. 1; AAG45476 and 2; AAD27727." evidence="14" ref="1 2">
    <original>A</original>
    <variation>P</variation>
    <location>
        <position position="250"/>
    </location>
</feature>